<reference key="1">
    <citation type="journal article" date="2001" name="Proc. Natl. Acad. Sci. U.S.A.">
        <title>Genome sequence of an industrial microorganism Streptomyces avermitilis: deducing the ability of producing secondary metabolites.</title>
        <authorList>
            <person name="Omura S."/>
            <person name="Ikeda H."/>
            <person name="Ishikawa J."/>
            <person name="Hanamoto A."/>
            <person name="Takahashi C."/>
            <person name="Shinose M."/>
            <person name="Takahashi Y."/>
            <person name="Horikawa H."/>
            <person name="Nakazawa H."/>
            <person name="Osonoe T."/>
            <person name="Kikuchi H."/>
            <person name="Shiba T."/>
            <person name="Sakaki Y."/>
            <person name="Hattori M."/>
        </authorList>
    </citation>
    <scope>NUCLEOTIDE SEQUENCE [LARGE SCALE GENOMIC DNA]</scope>
    <source>
        <strain>ATCC 31267 / DSM 46492 / JCM 5070 / NBRC 14893 / NCIMB 12804 / NRRL 8165 / MA-4680</strain>
    </source>
</reference>
<reference key="2">
    <citation type="journal article" date="2003" name="Nat. Biotechnol.">
        <title>Complete genome sequence and comparative analysis of the industrial microorganism Streptomyces avermitilis.</title>
        <authorList>
            <person name="Ikeda H."/>
            <person name="Ishikawa J."/>
            <person name="Hanamoto A."/>
            <person name="Shinose M."/>
            <person name="Kikuchi H."/>
            <person name="Shiba T."/>
            <person name="Sakaki Y."/>
            <person name="Hattori M."/>
            <person name="Omura S."/>
        </authorList>
    </citation>
    <scope>NUCLEOTIDE SEQUENCE [LARGE SCALE GENOMIC DNA]</scope>
    <source>
        <strain>ATCC 31267 / DSM 46492 / JCM 5070 / NBRC 14893 / NCIMB 12804 / NRRL 8165 / MA-4680</strain>
    </source>
</reference>
<evidence type="ECO:0000255" key="1">
    <source>
        <dbReference type="HAMAP-Rule" id="MF_00037"/>
    </source>
</evidence>
<gene>
    <name evidence="1" type="primary">murB</name>
    <name type="ordered locus">SAV_4905</name>
</gene>
<proteinExistence type="inferred from homology"/>
<dbReference type="EC" id="1.3.1.98" evidence="1"/>
<dbReference type="EMBL" id="BA000030">
    <property type="protein sequence ID" value="BAC72617.1"/>
    <property type="molecule type" value="Genomic_DNA"/>
</dbReference>
<dbReference type="SMR" id="Q82DR4"/>
<dbReference type="KEGG" id="sma:SAVERM_4905"/>
<dbReference type="eggNOG" id="COG0812">
    <property type="taxonomic scope" value="Bacteria"/>
</dbReference>
<dbReference type="HOGENOM" id="CLU_035304_0_1_11"/>
<dbReference type="OrthoDB" id="9804753at2"/>
<dbReference type="UniPathway" id="UPA00219"/>
<dbReference type="Proteomes" id="UP000000428">
    <property type="component" value="Chromosome"/>
</dbReference>
<dbReference type="GO" id="GO:0005829">
    <property type="term" value="C:cytosol"/>
    <property type="evidence" value="ECO:0007669"/>
    <property type="project" value="TreeGrafter"/>
</dbReference>
<dbReference type="GO" id="GO:0071949">
    <property type="term" value="F:FAD binding"/>
    <property type="evidence" value="ECO:0007669"/>
    <property type="project" value="InterPro"/>
</dbReference>
<dbReference type="GO" id="GO:0008762">
    <property type="term" value="F:UDP-N-acetylmuramate dehydrogenase activity"/>
    <property type="evidence" value="ECO:0007669"/>
    <property type="project" value="UniProtKB-UniRule"/>
</dbReference>
<dbReference type="GO" id="GO:0051301">
    <property type="term" value="P:cell division"/>
    <property type="evidence" value="ECO:0007669"/>
    <property type="project" value="UniProtKB-KW"/>
</dbReference>
<dbReference type="GO" id="GO:0071555">
    <property type="term" value="P:cell wall organization"/>
    <property type="evidence" value="ECO:0007669"/>
    <property type="project" value="UniProtKB-KW"/>
</dbReference>
<dbReference type="GO" id="GO:0009252">
    <property type="term" value="P:peptidoglycan biosynthetic process"/>
    <property type="evidence" value="ECO:0007669"/>
    <property type="project" value="UniProtKB-UniRule"/>
</dbReference>
<dbReference type="GO" id="GO:0008360">
    <property type="term" value="P:regulation of cell shape"/>
    <property type="evidence" value="ECO:0007669"/>
    <property type="project" value="UniProtKB-KW"/>
</dbReference>
<dbReference type="Gene3D" id="3.30.465.10">
    <property type="match status" value="1"/>
</dbReference>
<dbReference type="Gene3D" id="3.90.78.10">
    <property type="entry name" value="UDP-N-acetylenolpyruvoylglucosamine reductase, C-terminal domain"/>
    <property type="match status" value="1"/>
</dbReference>
<dbReference type="Gene3D" id="3.30.43.10">
    <property type="entry name" value="Uridine Diphospho-n-acetylenolpyruvylglucosamine Reductase, domain 2"/>
    <property type="match status" value="1"/>
</dbReference>
<dbReference type="HAMAP" id="MF_00037">
    <property type="entry name" value="MurB"/>
    <property type="match status" value="1"/>
</dbReference>
<dbReference type="InterPro" id="IPR016166">
    <property type="entry name" value="FAD-bd_PCMH"/>
</dbReference>
<dbReference type="InterPro" id="IPR036318">
    <property type="entry name" value="FAD-bd_PCMH-like_sf"/>
</dbReference>
<dbReference type="InterPro" id="IPR016167">
    <property type="entry name" value="FAD-bd_PCMH_sub1"/>
</dbReference>
<dbReference type="InterPro" id="IPR016169">
    <property type="entry name" value="FAD-bd_PCMH_sub2"/>
</dbReference>
<dbReference type="InterPro" id="IPR003170">
    <property type="entry name" value="MurB"/>
</dbReference>
<dbReference type="InterPro" id="IPR011601">
    <property type="entry name" value="MurB_C"/>
</dbReference>
<dbReference type="InterPro" id="IPR036635">
    <property type="entry name" value="MurB_C_sf"/>
</dbReference>
<dbReference type="InterPro" id="IPR006094">
    <property type="entry name" value="Oxid_FAD_bind_N"/>
</dbReference>
<dbReference type="NCBIfam" id="TIGR00179">
    <property type="entry name" value="murB"/>
    <property type="match status" value="1"/>
</dbReference>
<dbReference type="NCBIfam" id="NF010478">
    <property type="entry name" value="PRK13903.1"/>
    <property type="match status" value="1"/>
</dbReference>
<dbReference type="PANTHER" id="PTHR21071">
    <property type="entry name" value="UDP-N-ACETYLENOLPYRUVOYLGLUCOSAMINE REDUCTASE"/>
    <property type="match status" value="1"/>
</dbReference>
<dbReference type="PANTHER" id="PTHR21071:SF4">
    <property type="entry name" value="UDP-N-ACETYLENOLPYRUVOYLGLUCOSAMINE REDUCTASE"/>
    <property type="match status" value="1"/>
</dbReference>
<dbReference type="Pfam" id="PF01565">
    <property type="entry name" value="FAD_binding_4"/>
    <property type="match status" value="1"/>
</dbReference>
<dbReference type="Pfam" id="PF02873">
    <property type="entry name" value="MurB_C"/>
    <property type="match status" value="1"/>
</dbReference>
<dbReference type="SUPFAM" id="SSF56176">
    <property type="entry name" value="FAD-binding/transporter-associated domain-like"/>
    <property type="match status" value="1"/>
</dbReference>
<dbReference type="SUPFAM" id="SSF56194">
    <property type="entry name" value="Uridine diphospho-N-Acetylenolpyruvylglucosamine reductase, MurB, C-terminal domain"/>
    <property type="match status" value="1"/>
</dbReference>
<dbReference type="PROSITE" id="PS51387">
    <property type="entry name" value="FAD_PCMH"/>
    <property type="match status" value="1"/>
</dbReference>
<sequence>MPKRPTPSRTLVHVQELHDAPLAPLTTFRLGGPATRLITATTDAEVIAAVREADDSGTPLLLIGGGSNLVIGDKGFAGTALRIATTGFGLDGTKVELAAGEVWTDAVARTVEAGLAGIECLAGIPGSAGATPIQNVGAYGQEVSSTITEVIAYDRKTHETVTIPNAECAFSYRHSRFKADPERYVVLRVRFELEDADGLSAPVKYAETARALGVEPGDRVPLAAARETVLGLRSGKGMVLDPEDHDTWSAGSFFTNPILTEAECAAFHARVRERLGADAVPPAYPAGDGRTKTSAAWLIDKSGFTKGYGSGPARISTKHTLALTNRGEATTEDLLALAREVVAGVRDAFGITLVNEPVTVGVEL</sequence>
<name>MURB_STRAW</name>
<protein>
    <recommendedName>
        <fullName evidence="1">UDP-N-acetylenolpyruvoylglucosamine reductase</fullName>
        <ecNumber evidence="1">1.3.1.98</ecNumber>
    </recommendedName>
    <alternativeName>
        <fullName evidence="1">UDP-N-acetylmuramate dehydrogenase</fullName>
    </alternativeName>
</protein>
<organism>
    <name type="scientific">Streptomyces avermitilis (strain ATCC 31267 / DSM 46492 / JCM 5070 / NBRC 14893 / NCIMB 12804 / NRRL 8165 / MA-4680)</name>
    <dbReference type="NCBI Taxonomy" id="227882"/>
    <lineage>
        <taxon>Bacteria</taxon>
        <taxon>Bacillati</taxon>
        <taxon>Actinomycetota</taxon>
        <taxon>Actinomycetes</taxon>
        <taxon>Kitasatosporales</taxon>
        <taxon>Streptomycetaceae</taxon>
        <taxon>Streptomyces</taxon>
    </lineage>
</organism>
<comment type="function">
    <text evidence="1">Cell wall formation.</text>
</comment>
<comment type="catalytic activity">
    <reaction evidence="1">
        <text>UDP-N-acetyl-alpha-D-muramate + NADP(+) = UDP-N-acetyl-3-O-(1-carboxyvinyl)-alpha-D-glucosamine + NADPH + H(+)</text>
        <dbReference type="Rhea" id="RHEA:12248"/>
        <dbReference type="ChEBI" id="CHEBI:15378"/>
        <dbReference type="ChEBI" id="CHEBI:57783"/>
        <dbReference type="ChEBI" id="CHEBI:58349"/>
        <dbReference type="ChEBI" id="CHEBI:68483"/>
        <dbReference type="ChEBI" id="CHEBI:70757"/>
        <dbReference type="EC" id="1.3.1.98"/>
    </reaction>
</comment>
<comment type="cofactor">
    <cofactor evidence="1">
        <name>FAD</name>
        <dbReference type="ChEBI" id="CHEBI:57692"/>
    </cofactor>
</comment>
<comment type="pathway">
    <text evidence="1">Cell wall biogenesis; peptidoglycan biosynthesis.</text>
</comment>
<comment type="subcellular location">
    <subcellularLocation>
        <location evidence="1">Cytoplasm</location>
    </subcellularLocation>
</comment>
<comment type="similarity">
    <text evidence="1">Belongs to the MurB family.</text>
</comment>
<keyword id="KW-0131">Cell cycle</keyword>
<keyword id="KW-0132">Cell division</keyword>
<keyword id="KW-0133">Cell shape</keyword>
<keyword id="KW-0961">Cell wall biogenesis/degradation</keyword>
<keyword id="KW-0963">Cytoplasm</keyword>
<keyword id="KW-0274">FAD</keyword>
<keyword id="KW-0285">Flavoprotein</keyword>
<keyword id="KW-0521">NADP</keyword>
<keyword id="KW-0560">Oxidoreductase</keyword>
<keyword id="KW-0573">Peptidoglycan synthesis</keyword>
<keyword id="KW-1185">Reference proteome</keyword>
<feature type="chain" id="PRO_0000179267" description="UDP-N-acetylenolpyruvoylglucosamine reductase">
    <location>
        <begin position="1"/>
        <end position="364"/>
    </location>
</feature>
<feature type="domain" description="FAD-binding PCMH-type" evidence="1">
    <location>
        <begin position="30"/>
        <end position="196"/>
    </location>
</feature>
<feature type="active site" evidence="1">
    <location>
        <position position="173"/>
    </location>
</feature>
<feature type="active site" description="Proton donor" evidence="1">
    <location>
        <position position="252"/>
    </location>
</feature>
<feature type="active site" evidence="1">
    <location>
        <position position="356"/>
    </location>
</feature>
<accession>Q82DR4</accession>